<sequence length="38" mass="4379">MKVRASVKRICRNCKVIKRNGVVRVICSSDPKHKQRQG</sequence>
<dbReference type="EMBL" id="CP000388">
    <property type="protein sequence ID" value="ABG39536.1"/>
    <property type="molecule type" value="Genomic_DNA"/>
</dbReference>
<dbReference type="SMR" id="Q15X52"/>
<dbReference type="STRING" id="342610.Patl_1010"/>
<dbReference type="KEGG" id="pat:Patl_1010"/>
<dbReference type="eggNOG" id="COG0257">
    <property type="taxonomic scope" value="Bacteria"/>
</dbReference>
<dbReference type="HOGENOM" id="CLU_135723_6_2_6"/>
<dbReference type="OrthoDB" id="9802520at2"/>
<dbReference type="Proteomes" id="UP000001981">
    <property type="component" value="Chromosome"/>
</dbReference>
<dbReference type="GO" id="GO:0005737">
    <property type="term" value="C:cytoplasm"/>
    <property type="evidence" value="ECO:0007669"/>
    <property type="project" value="UniProtKB-ARBA"/>
</dbReference>
<dbReference type="GO" id="GO:1990904">
    <property type="term" value="C:ribonucleoprotein complex"/>
    <property type="evidence" value="ECO:0007669"/>
    <property type="project" value="UniProtKB-KW"/>
</dbReference>
<dbReference type="GO" id="GO:0005840">
    <property type="term" value="C:ribosome"/>
    <property type="evidence" value="ECO:0007669"/>
    <property type="project" value="UniProtKB-KW"/>
</dbReference>
<dbReference type="GO" id="GO:0003735">
    <property type="term" value="F:structural constituent of ribosome"/>
    <property type="evidence" value="ECO:0007669"/>
    <property type="project" value="InterPro"/>
</dbReference>
<dbReference type="GO" id="GO:0006412">
    <property type="term" value="P:translation"/>
    <property type="evidence" value="ECO:0007669"/>
    <property type="project" value="UniProtKB-UniRule"/>
</dbReference>
<dbReference type="HAMAP" id="MF_00251">
    <property type="entry name" value="Ribosomal_bL36"/>
    <property type="match status" value="1"/>
</dbReference>
<dbReference type="InterPro" id="IPR000473">
    <property type="entry name" value="Ribosomal_bL36"/>
</dbReference>
<dbReference type="InterPro" id="IPR035977">
    <property type="entry name" value="Ribosomal_bL36_sp"/>
</dbReference>
<dbReference type="NCBIfam" id="TIGR01022">
    <property type="entry name" value="rpmJ_bact"/>
    <property type="match status" value="1"/>
</dbReference>
<dbReference type="PANTHER" id="PTHR42888">
    <property type="entry name" value="50S RIBOSOMAL PROTEIN L36, CHLOROPLASTIC"/>
    <property type="match status" value="1"/>
</dbReference>
<dbReference type="PANTHER" id="PTHR42888:SF1">
    <property type="entry name" value="LARGE RIBOSOMAL SUBUNIT PROTEIN BL36C"/>
    <property type="match status" value="1"/>
</dbReference>
<dbReference type="Pfam" id="PF00444">
    <property type="entry name" value="Ribosomal_L36"/>
    <property type="match status" value="1"/>
</dbReference>
<dbReference type="SUPFAM" id="SSF57840">
    <property type="entry name" value="Ribosomal protein L36"/>
    <property type="match status" value="1"/>
</dbReference>
<dbReference type="PROSITE" id="PS00828">
    <property type="entry name" value="RIBOSOMAL_L36"/>
    <property type="match status" value="1"/>
</dbReference>
<gene>
    <name evidence="1" type="primary">rpmJ</name>
    <name type="ordered locus">Patl_1010</name>
</gene>
<evidence type="ECO:0000255" key="1">
    <source>
        <dbReference type="HAMAP-Rule" id="MF_00251"/>
    </source>
</evidence>
<evidence type="ECO:0000305" key="2"/>
<keyword id="KW-0687">Ribonucleoprotein</keyword>
<keyword id="KW-0689">Ribosomal protein</keyword>
<protein>
    <recommendedName>
        <fullName evidence="1">Large ribosomal subunit protein bL36</fullName>
    </recommendedName>
    <alternativeName>
        <fullName evidence="2">50S ribosomal protein L36</fullName>
    </alternativeName>
</protein>
<feature type="chain" id="PRO_0000302269" description="Large ribosomal subunit protein bL36">
    <location>
        <begin position="1"/>
        <end position="38"/>
    </location>
</feature>
<reference key="1">
    <citation type="submission" date="2006-06" db="EMBL/GenBank/DDBJ databases">
        <title>Complete sequence of Pseudoalteromonas atlantica T6c.</title>
        <authorList>
            <consortium name="US DOE Joint Genome Institute"/>
            <person name="Copeland A."/>
            <person name="Lucas S."/>
            <person name="Lapidus A."/>
            <person name="Barry K."/>
            <person name="Detter J.C."/>
            <person name="Glavina del Rio T."/>
            <person name="Hammon N."/>
            <person name="Israni S."/>
            <person name="Dalin E."/>
            <person name="Tice H."/>
            <person name="Pitluck S."/>
            <person name="Saunders E."/>
            <person name="Brettin T."/>
            <person name="Bruce D."/>
            <person name="Han C."/>
            <person name="Tapia R."/>
            <person name="Gilna P."/>
            <person name="Schmutz J."/>
            <person name="Larimer F."/>
            <person name="Land M."/>
            <person name="Hauser L."/>
            <person name="Kyrpides N."/>
            <person name="Kim E."/>
            <person name="Karls A.C."/>
            <person name="Bartlett D."/>
            <person name="Higgins B.P."/>
            <person name="Richardson P."/>
        </authorList>
    </citation>
    <scope>NUCLEOTIDE SEQUENCE [LARGE SCALE GENOMIC DNA]</scope>
    <source>
        <strain>T6c / ATCC BAA-1087</strain>
    </source>
</reference>
<organism>
    <name type="scientific">Pseudoalteromonas atlantica (strain T6c / ATCC BAA-1087)</name>
    <dbReference type="NCBI Taxonomy" id="3042615"/>
    <lineage>
        <taxon>Bacteria</taxon>
        <taxon>Pseudomonadati</taxon>
        <taxon>Pseudomonadota</taxon>
        <taxon>Gammaproteobacteria</taxon>
        <taxon>Alteromonadales</taxon>
        <taxon>Alteromonadaceae</taxon>
        <taxon>Paraglaciecola</taxon>
    </lineage>
</organism>
<proteinExistence type="inferred from homology"/>
<accession>Q15X52</accession>
<name>RL36_PSEA6</name>
<comment type="similarity">
    <text evidence="1">Belongs to the bacterial ribosomal protein bL36 family.</text>
</comment>